<gene>
    <name evidence="1" type="primary">tpiA</name>
    <name type="ordered locus">PAM_170</name>
</gene>
<accession>Q6YR48</accession>
<sequence>MNYKPRTKVIAGNWKMYKCKDEALEFIQKVSLQVPDQTQVQTLIFPQLTLLDSLAQLQGTNLQVGAQNMFYESEGAFTGEVSPQNLLSLGVKHVLLGHSERRTFFGETDQTVNLKLLSALKHKLVPTVCVGESLLTKENNQTQVFLDQQLTNIFAGVPEEALQNIIIAYEPVWAIGTGKSATPQDANKVIEQIRDKVTALYSSQASCAMRIIYGGSVSVANIKTILEQPAIDGILAGKASLQTEDFLFFAQIASKQALASTKDIFQKNDCPFCC</sequence>
<name>TPIS_ONYPE</name>
<protein>
    <recommendedName>
        <fullName evidence="1">Triosephosphate isomerase</fullName>
        <shortName evidence="1">TIM</shortName>
        <shortName evidence="1">TPI</shortName>
        <ecNumber evidence="1">5.3.1.1</ecNumber>
    </recommendedName>
    <alternativeName>
        <fullName evidence="1">Triose-phosphate isomerase</fullName>
    </alternativeName>
</protein>
<dbReference type="EC" id="5.3.1.1" evidence="1"/>
<dbReference type="EMBL" id="AP006628">
    <property type="protein sequence ID" value="BAD04255.1"/>
    <property type="molecule type" value="Genomic_DNA"/>
</dbReference>
<dbReference type="SMR" id="Q6YR48"/>
<dbReference type="STRING" id="262768.PAM_170"/>
<dbReference type="KEGG" id="poy:PAM_170"/>
<dbReference type="eggNOG" id="COG0149">
    <property type="taxonomic scope" value="Bacteria"/>
</dbReference>
<dbReference type="HOGENOM" id="CLU_024251_2_3_14"/>
<dbReference type="BioCyc" id="OYEL262768:G1G26-209-MONOMER"/>
<dbReference type="UniPathway" id="UPA00109">
    <property type="reaction ID" value="UER00189"/>
</dbReference>
<dbReference type="UniPathway" id="UPA00138"/>
<dbReference type="Proteomes" id="UP000002523">
    <property type="component" value="Chromosome"/>
</dbReference>
<dbReference type="GO" id="GO:0005829">
    <property type="term" value="C:cytosol"/>
    <property type="evidence" value="ECO:0007669"/>
    <property type="project" value="TreeGrafter"/>
</dbReference>
<dbReference type="GO" id="GO:0004807">
    <property type="term" value="F:triose-phosphate isomerase activity"/>
    <property type="evidence" value="ECO:0007669"/>
    <property type="project" value="UniProtKB-UniRule"/>
</dbReference>
<dbReference type="GO" id="GO:0006094">
    <property type="term" value="P:gluconeogenesis"/>
    <property type="evidence" value="ECO:0007669"/>
    <property type="project" value="UniProtKB-UniRule"/>
</dbReference>
<dbReference type="GO" id="GO:0046166">
    <property type="term" value="P:glyceraldehyde-3-phosphate biosynthetic process"/>
    <property type="evidence" value="ECO:0007669"/>
    <property type="project" value="TreeGrafter"/>
</dbReference>
<dbReference type="GO" id="GO:0019563">
    <property type="term" value="P:glycerol catabolic process"/>
    <property type="evidence" value="ECO:0007669"/>
    <property type="project" value="TreeGrafter"/>
</dbReference>
<dbReference type="GO" id="GO:0006096">
    <property type="term" value="P:glycolytic process"/>
    <property type="evidence" value="ECO:0007669"/>
    <property type="project" value="UniProtKB-UniRule"/>
</dbReference>
<dbReference type="CDD" id="cd00311">
    <property type="entry name" value="TIM"/>
    <property type="match status" value="1"/>
</dbReference>
<dbReference type="FunFam" id="3.20.20.70:FF:000016">
    <property type="entry name" value="Triosephosphate isomerase"/>
    <property type="match status" value="1"/>
</dbReference>
<dbReference type="Gene3D" id="3.20.20.70">
    <property type="entry name" value="Aldolase class I"/>
    <property type="match status" value="1"/>
</dbReference>
<dbReference type="HAMAP" id="MF_00147_B">
    <property type="entry name" value="TIM_B"/>
    <property type="match status" value="1"/>
</dbReference>
<dbReference type="InterPro" id="IPR013785">
    <property type="entry name" value="Aldolase_TIM"/>
</dbReference>
<dbReference type="InterPro" id="IPR035990">
    <property type="entry name" value="TIM_sf"/>
</dbReference>
<dbReference type="InterPro" id="IPR022896">
    <property type="entry name" value="TrioseP_Isoase_bac/euk"/>
</dbReference>
<dbReference type="InterPro" id="IPR000652">
    <property type="entry name" value="Triosephosphate_isomerase"/>
</dbReference>
<dbReference type="InterPro" id="IPR020861">
    <property type="entry name" value="Triosephosphate_isomerase_AS"/>
</dbReference>
<dbReference type="NCBIfam" id="TIGR00419">
    <property type="entry name" value="tim"/>
    <property type="match status" value="1"/>
</dbReference>
<dbReference type="PANTHER" id="PTHR21139">
    <property type="entry name" value="TRIOSEPHOSPHATE ISOMERASE"/>
    <property type="match status" value="1"/>
</dbReference>
<dbReference type="PANTHER" id="PTHR21139:SF42">
    <property type="entry name" value="TRIOSEPHOSPHATE ISOMERASE"/>
    <property type="match status" value="1"/>
</dbReference>
<dbReference type="Pfam" id="PF00121">
    <property type="entry name" value="TIM"/>
    <property type="match status" value="1"/>
</dbReference>
<dbReference type="SUPFAM" id="SSF51351">
    <property type="entry name" value="Triosephosphate isomerase (TIM)"/>
    <property type="match status" value="1"/>
</dbReference>
<dbReference type="PROSITE" id="PS00171">
    <property type="entry name" value="TIM_1"/>
    <property type="match status" value="1"/>
</dbReference>
<dbReference type="PROSITE" id="PS51440">
    <property type="entry name" value="TIM_2"/>
    <property type="match status" value="1"/>
</dbReference>
<organism>
    <name type="scientific">Onion yellows phytoplasma (strain OY-M)</name>
    <dbReference type="NCBI Taxonomy" id="262768"/>
    <lineage>
        <taxon>Bacteria</taxon>
        <taxon>Bacillati</taxon>
        <taxon>Mycoplasmatota</taxon>
        <taxon>Mollicutes</taxon>
        <taxon>Acholeplasmatales</taxon>
        <taxon>Acholeplasmataceae</taxon>
        <taxon>Candidatus Phytoplasma</taxon>
        <taxon>16SrI (Aster yellows group)</taxon>
    </lineage>
</organism>
<evidence type="ECO:0000255" key="1">
    <source>
        <dbReference type="HAMAP-Rule" id="MF_00147"/>
    </source>
</evidence>
<proteinExistence type="inferred from homology"/>
<feature type="chain" id="PRO_1000009849" description="Triosephosphate isomerase">
    <location>
        <begin position="1"/>
        <end position="274"/>
    </location>
</feature>
<feature type="active site" description="Electrophile" evidence="1">
    <location>
        <position position="98"/>
    </location>
</feature>
<feature type="active site" description="Proton acceptor" evidence="1">
    <location>
        <position position="170"/>
    </location>
</feature>
<feature type="binding site" evidence="1">
    <location>
        <begin position="13"/>
        <end position="15"/>
    </location>
    <ligand>
        <name>substrate</name>
    </ligand>
</feature>
<feature type="binding site" evidence="1">
    <location>
        <position position="176"/>
    </location>
    <ligand>
        <name>substrate</name>
    </ligand>
</feature>
<feature type="binding site" evidence="1">
    <location>
        <position position="216"/>
    </location>
    <ligand>
        <name>substrate</name>
    </ligand>
</feature>
<comment type="function">
    <text evidence="1">Involved in the gluconeogenesis. Catalyzes stereospecifically the conversion of dihydroxyacetone phosphate (DHAP) to D-glyceraldehyde-3-phosphate (G3P).</text>
</comment>
<comment type="catalytic activity">
    <reaction evidence="1">
        <text>D-glyceraldehyde 3-phosphate = dihydroxyacetone phosphate</text>
        <dbReference type="Rhea" id="RHEA:18585"/>
        <dbReference type="ChEBI" id="CHEBI:57642"/>
        <dbReference type="ChEBI" id="CHEBI:59776"/>
        <dbReference type="EC" id="5.3.1.1"/>
    </reaction>
</comment>
<comment type="pathway">
    <text evidence="1">Carbohydrate biosynthesis; gluconeogenesis.</text>
</comment>
<comment type="pathway">
    <text evidence="1">Carbohydrate degradation; glycolysis; D-glyceraldehyde 3-phosphate from glycerone phosphate: step 1/1.</text>
</comment>
<comment type="subunit">
    <text evidence="1">Homodimer.</text>
</comment>
<comment type="subcellular location">
    <subcellularLocation>
        <location evidence="1">Cytoplasm</location>
    </subcellularLocation>
</comment>
<comment type="similarity">
    <text evidence="1">Belongs to the triosephosphate isomerase family.</text>
</comment>
<keyword id="KW-0963">Cytoplasm</keyword>
<keyword id="KW-0312">Gluconeogenesis</keyword>
<keyword id="KW-0324">Glycolysis</keyword>
<keyword id="KW-0413">Isomerase</keyword>
<reference key="1">
    <citation type="journal article" date="2004" name="Nat. Genet.">
        <title>Reductive evolution suggested from the complete genome sequence of a plant-pathogenic phytoplasma.</title>
        <authorList>
            <person name="Oshima K."/>
            <person name="Kakizawa S."/>
            <person name="Nishigawa H."/>
            <person name="Jung H.-Y."/>
            <person name="Wei W."/>
            <person name="Suzuki S."/>
            <person name="Arashida R."/>
            <person name="Nakata D."/>
            <person name="Miyata S."/>
            <person name="Ugaki M."/>
            <person name="Namba S."/>
        </authorList>
    </citation>
    <scope>NUCLEOTIDE SEQUENCE [LARGE SCALE GENOMIC DNA]</scope>
    <source>
        <strain>OY-M</strain>
    </source>
</reference>